<gene>
    <name type="primary">ARHGAP20</name>
    <name type="synonym">KIAA1391</name>
</gene>
<reference key="1">
    <citation type="journal article" date="2005" name="Genes Chromosomes Cancer">
        <title>Translocation t(X;11)(q13;q23) in B-cell chronic lymphocytic leukemia disrupts two novel genes.</title>
        <authorList>
            <person name="Kalla C."/>
            <person name="Nentwich H."/>
            <person name="Schlotter M."/>
            <person name="Mertens D."/>
            <person name="Wildenberger K."/>
            <person name="Doehner H."/>
            <person name="Stilgenbauer S."/>
            <person name="Lichter P."/>
        </authorList>
    </citation>
    <scope>NUCLEOTIDE SEQUENCE [MRNA] (ISOFORMS 1; 2; 3 AND 4)</scope>
    <scope>TISSUE SPECIFICITY</scope>
    <scope>DEVELOPMENTAL STAGE</scope>
    <scope>CHROMOSOMAL TRANSLOCATION WITH BRWD3</scope>
</reference>
<reference key="2">
    <citation type="journal article" date="2000" name="DNA Res.">
        <title>Prediction of the coding sequences of unidentified human genes. XVI. The complete sequences of 150 new cDNA clones from brain which code for large proteins in vitro.</title>
        <authorList>
            <person name="Nagase T."/>
            <person name="Kikuno R."/>
            <person name="Ishikawa K."/>
            <person name="Hirosawa M."/>
            <person name="Ohara O."/>
        </authorList>
    </citation>
    <scope>NUCLEOTIDE SEQUENCE [LARGE SCALE MRNA]</scope>
    <source>
        <tissue>Brain</tissue>
    </source>
</reference>
<reference key="3">
    <citation type="submission" date="2007-02" db="EMBL/GenBank/DDBJ databases">
        <authorList>
            <consortium name="NHLBI resequencing and genotyping service (RS&amp;G)"/>
        </authorList>
    </citation>
    <scope>NUCLEOTIDE SEQUENCE [GENOMIC DNA]</scope>
</reference>
<reference key="4">
    <citation type="submission" date="2005-07" db="EMBL/GenBank/DDBJ databases">
        <authorList>
            <person name="Mural R.J."/>
            <person name="Istrail S."/>
            <person name="Sutton G.G."/>
            <person name="Florea L."/>
            <person name="Halpern A.L."/>
            <person name="Mobarry C.M."/>
            <person name="Lippert R."/>
            <person name="Walenz B."/>
            <person name="Shatkay H."/>
            <person name="Dew I."/>
            <person name="Miller J.R."/>
            <person name="Flanigan M.J."/>
            <person name="Edwards N.J."/>
            <person name="Bolanos R."/>
            <person name="Fasulo D."/>
            <person name="Halldorsson B.V."/>
            <person name="Hannenhalli S."/>
            <person name="Turner R."/>
            <person name="Yooseph S."/>
            <person name="Lu F."/>
            <person name="Nusskern D.R."/>
            <person name="Shue B.C."/>
            <person name="Zheng X.H."/>
            <person name="Zhong F."/>
            <person name="Delcher A.L."/>
            <person name="Huson D.H."/>
            <person name="Kravitz S.A."/>
            <person name="Mouchard L."/>
            <person name="Reinert K."/>
            <person name="Remington K.A."/>
            <person name="Clark A.G."/>
            <person name="Waterman M.S."/>
            <person name="Eichler E.E."/>
            <person name="Adams M.D."/>
            <person name="Hunkapiller M.W."/>
            <person name="Myers E.W."/>
            <person name="Venter J.C."/>
        </authorList>
    </citation>
    <scope>NUCLEOTIDE SEQUENCE [LARGE SCALE GENOMIC DNA]</scope>
</reference>
<reference key="5">
    <citation type="journal article" date="2004" name="Nat. Genet.">
        <title>Complete sequencing and characterization of 21,243 full-length human cDNAs.</title>
        <authorList>
            <person name="Ota T."/>
            <person name="Suzuki Y."/>
            <person name="Nishikawa T."/>
            <person name="Otsuki T."/>
            <person name="Sugiyama T."/>
            <person name="Irie R."/>
            <person name="Wakamatsu A."/>
            <person name="Hayashi K."/>
            <person name="Sato H."/>
            <person name="Nagai K."/>
            <person name="Kimura K."/>
            <person name="Makita H."/>
            <person name="Sekine M."/>
            <person name="Obayashi M."/>
            <person name="Nishi T."/>
            <person name="Shibahara T."/>
            <person name="Tanaka T."/>
            <person name="Ishii S."/>
            <person name="Yamamoto J."/>
            <person name="Saito K."/>
            <person name="Kawai Y."/>
            <person name="Isono Y."/>
            <person name="Nakamura Y."/>
            <person name="Nagahari K."/>
            <person name="Murakami K."/>
            <person name="Yasuda T."/>
            <person name="Iwayanagi T."/>
            <person name="Wagatsuma M."/>
            <person name="Shiratori A."/>
            <person name="Sudo H."/>
            <person name="Hosoiri T."/>
            <person name="Kaku Y."/>
            <person name="Kodaira H."/>
            <person name="Kondo H."/>
            <person name="Sugawara M."/>
            <person name="Takahashi M."/>
            <person name="Kanda K."/>
            <person name="Yokoi T."/>
            <person name="Furuya T."/>
            <person name="Kikkawa E."/>
            <person name="Omura Y."/>
            <person name="Abe K."/>
            <person name="Kamihara K."/>
            <person name="Katsuta N."/>
            <person name="Sato K."/>
            <person name="Tanikawa M."/>
            <person name="Yamazaki M."/>
            <person name="Ninomiya K."/>
            <person name="Ishibashi T."/>
            <person name="Yamashita H."/>
            <person name="Murakawa K."/>
            <person name="Fujimori K."/>
            <person name="Tanai H."/>
            <person name="Kimata M."/>
            <person name="Watanabe M."/>
            <person name="Hiraoka S."/>
            <person name="Chiba Y."/>
            <person name="Ishida S."/>
            <person name="Ono Y."/>
            <person name="Takiguchi S."/>
            <person name="Watanabe S."/>
            <person name="Yosida M."/>
            <person name="Hotuta T."/>
            <person name="Kusano J."/>
            <person name="Kanehori K."/>
            <person name="Takahashi-Fujii A."/>
            <person name="Hara H."/>
            <person name="Tanase T.-O."/>
            <person name="Nomura Y."/>
            <person name="Togiya S."/>
            <person name="Komai F."/>
            <person name="Hara R."/>
            <person name="Takeuchi K."/>
            <person name="Arita M."/>
            <person name="Imose N."/>
            <person name="Musashino K."/>
            <person name="Yuuki H."/>
            <person name="Oshima A."/>
            <person name="Sasaki N."/>
            <person name="Aotsuka S."/>
            <person name="Yoshikawa Y."/>
            <person name="Matsunawa H."/>
            <person name="Ichihara T."/>
            <person name="Shiohata N."/>
            <person name="Sano S."/>
            <person name="Moriya S."/>
            <person name="Momiyama H."/>
            <person name="Satoh N."/>
            <person name="Takami S."/>
            <person name="Terashima Y."/>
            <person name="Suzuki O."/>
            <person name="Nakagawa S."/>
            <person name="Senoh A."/>
            <person name="Mizoguchi H."/>
            <person name="Goto Y."/>
            <person name="Shimizu F."/>
            <person name="Wakebe H."/>
            <person name="Hishigaki H."/>
            <person name="Watanabe T."/>
            <person name="Sugiyama A."/>
            <person name="Takemoto M."/>
            <person name="Kawakami B."/>
            <person name="Yamazaki M."/>
            <person name="Watanabe K."/>
            <person name="Kumagai A."/>
            <person name="Itakura S."/>
            <person name="Fukuzumi Y."/>
            <person name="Fujimori Y."/>
            <person name="Komiyama M."/>
            <person name="Tashiro H."/>
            <person name="Tanigami A."/>
            <person name="Fujiwara T."/>
            <person name="Ono T."/>
            <person name="Yamada K."/>
            <person name="Fujii Y."/>
            <person name="Ozaki K."/>
            <person name="Hirao M."/>
            <person name="Ohmori Y."/>
            <person name="Kawabata A."/>
            <person name="Hikiji T."/>
            <person name="Kobatake N."/>
            <person name="Inagaki H."/>
            <person name="Ikema Y."/>
            <person name="Okamoto S."/>
            <person name="Okitani R."/>
            <person name="Kawakami T."/>
            <person name="Noguchi S."/>
            <person name="Itoh T."/>
            <person name="Shigeta K."/>
            <person name="Senba T."/>
            <person name="Matsumura K."/>
            <person name="Nakajima Y."/>
            <person name="Mizuno T."/>
            <person name="Morinaga M."/>
            <person name="Sasaki M."/>
            <person name="Togashi T."/>
            <person name="Oyama M."/>
            <person name="Hata H."/>
            <person name="Watanabe M."/>
            <person name="Komatsu T."/>
            <person name="Mizushima-Sugano J."/>
            <person name="Satoh T."/>
            <person name="Shirai Y."/>
            <person name="Takahashi Y."/>
            <person name="Nakagawa K."/>
            <person name="Okumura K."/>
            <person name="Nagase T."/>
            <person name="Nomura N."/>
            <person name="Kikuchi H."/>
            <person name="Masuho Y."/>
            <person name="Yamashita R."/>
            <person name="Nakai K."/>
            <person name="Yada T."/>
            <person name="Nakamura Y."/>
            <person name="Ohara O."/>
            <person name="Isogai T."/>
            <person name="Sugano S."/>
        </authorList>
    </citation>
    <scope>NUCLEOTIDE SEQUENCE [LARGE SCALE MRNA] OF 436-1185 (ISOFORMS 1/2/3/4)</scope>
    <source>
        <tissue>Testis</tissue>
    </source>
</reference>
<reference key="6">
    <citation type="journal article" date="2004" name="Genome Res.">
        <title>The status, quality, and expansion of the NIH full-length cDNA project: the Mammalian Gene Collection (MGC).</title>
        <authorList>
            <consortium name="The MGC Project Team"/>
        </authorList>
    </citation>
    <scope>NUCLEOTIDE SEQUENCE [LARGE SCALE MRNA] OF 436-1185 (ISOFORMS 1/2/3/4)</scope>
    <scope>VARIANT ASP-632</scope>
    <source>
        <tissue>Testis</tissue>
    </source>
</reference>
<reference key="7">
    <citation type="journal article" date="2003" name="Int. J. Oncol.">
        <title>Identification and characterization of human KIAA1391 and mouse Kiaa1391 genes encoding novel RhoGAP family proteins with RA domain and ANXL repeats.</title>
        <authorList>
            <person name="Katoh M."/>
            <person name="Katoh M."/>
        </authorList>
    </citation>
    <scope>IDENTIFICATION</scope>
</reference>
<feature type="chain" id="PRO_0000283086" description="Rho GTPase-activating protein 20">
    <location>
        <begin position="1"/>
        <end position="1191"/>
    </location>
</feature>
<feature type="domain" description="PH">
    <location>
        <begin position="78"/>
        <end position="180"/>
    </location>
</feature>
<feature type="domain" description="Ras-associating" evidence="3">
    <location>
        <begin position="194"/>
        <end position="295"/>
    </location>
</feature>
<feature type="domain" description="Rho-GAP" evidence="4">
    <location>
        <begin position="365"/>
        <end position="551"/>
    </location>
</feature>
<feature type="region of interest" description="Disordered" evidence="5">
    <location>
        <begin position="1"/>
        <end position="45"/>
    </location>
</feature>
<feature type="region of interest" description="Disordered" evidence="5">
    <location>
        <begin position="768"/>
        <end position="791"/>
    </location>
</feature>
<feature type="region of interest" description="Disordered" evidence="5">
    <location>
        <begin position="926"/>
        <end position="1014"/>
    </location>
</feature>
<feature type="region of interest" description="Disordered" evidence="5">
    <location>
        <begin position="1052"/>
        <end position="1123"/>
    </location>
</feature>
<feature type="region of interest" description="Disordered" evidence="5">
    <location>
        <begin position="1140"/>
        <end position="1191"/>
    </location>
</feature>
<feature type="compositionally biased region" description="Polar residues" evidence="5">
    <location>
        <begin position="1"/>
        <end position="23"/>
    </location>
</feature>
<feature type="compositionally biased region" description="Low complexity" evidence="5">
    <location>
        <begin position="934"/>
        <end position="961"/>
    </location>
</feature>
<feature type="compositionally biased region" description="Polar residues" evidence="5">
    <location>
        <begin position="962"/>
        <end position="981"/>
    </location>
</feature>
<feature type="compositionally biased region" description="Polar residues" evidence="5">
    <location>
        <begin position="1103"/>
        <end position="1116"/>
    </location>
</feature>
<feature type="compositionally biased region" description="Basic and acidic residues" evidence="5">
    <location>
        <begin position="1182"/>
        <end position="1191"/>
    </location>
</feature>
<feature type="site" description="Arginine finger; crucial for GTP hydrolysis by stabilizing the transition state" evidence="4">
    <location>
        <position position="399"/>
    </location>
</feature>
<feature type="modified residue" description="Phosphoserine" evidence="2">
    <location>
        <position position="46"/>
    </location>
</feature>
<feature type="modified residue" description="Phosphoserine" evidence="2">
    <location>
        <position position="704"/>
    </location>
</feature>
<feature type="modified residue" description="Phosphoserine" evidence="2">
    <location>
        <position position="730"/>
    </location>
</feature>
<feature type="splice variant" id="VSP_024296" description="In isoform 4." evidence="8">
    <location>
        <begin position="1"/>
        <end position="36"/>
    </location>
</feature>
<feature type="splice variant" id="VSP_024294" description="In isoform 2." evidence="8">
    <original>MEAMSPQQETLGGQPGRSSSLTGVSRLAGGSCTK</original>
    <variation>MTFWIIIN</variation>
    <location>
        <begin position="1"/>
        <end position="34"/>
    </location>
</feature>
<feature type="splice variant" id="VSP_024295" description="In isoform 3." evidence="8">
    <original>MEAMSPQQETLGGQPGRSSSLTGVSRLAGGSCT</original>
    <variation>MSARERQPAL</variation>
    <location>
        <begin position="1"/>
        <end position="33"/>
    </location>
</feature>
<feature type="sequence variant" id="VAR_031489" description="In dbSNP:rs7936020.">
    <original>A</original>
    <variation>T</variation>
    <location>
        <position position="522"/>
    </location>
</feature>
<feature type="sequence variant" id="VAR_031490" description="In dbSNP:rs17853925." evidence="6">
    <original>G</original>
    <variation>D</variation>
    <location>
        <position position="632"/>
    </location>
</feature>
<feature type="helix" evidence="11">
    <location>
        <begin position="367"/>
        <end position="370"/>
    </location>
</feature>
<feature type="helix" evidence="11">
    <location>
        <begin position="372"/>
        <end position="374"/>
    </location>
</feature>
<feature type="helix" evidence="11">
    <location>
        <begin position="378"/>
        <end position="390"/>
    </location>
</feature>
<feature type="helix" evidence="11">
    <location>
        <begin position="391"/>
        <end position="393"/>
    </location>
</feature>
<feature type="turn" evidence="11">
    <location>
        <begin position="395"/>
        <end position="399"/>
    </location>
</feature>
<feature type="helix" evidence="11">
    <location>
        <begin position="404"/>
        <end position="415"/>
    </location>
</feature>
<feature type="helix" evidence="11">
    <location>
        <begin position="427"/>
        <end position="439"/>
    </location>
</feature>
<feature type="turn" evidence="11">
    <location>
        <begin position="442"/>
        <end position="447"/>
    </location>
</feature>
<feature type="helix" evidence="11">
    <location>
        <begin position="448"/>
        <end position="450"/>
    </location>
</feature>
<feature type="helix" evidence="11">
    <location>
        <begin position="451"/>
        <end position="456"/>
    </location>
</feature>
<feature type="helix" evidence="11">
    <location>
        <begin position="457"/>
        <end position="459"/>
    </location>
</feature>
<feature type="strand" evidence="11">
    <location>
        <begin position="460"/>
        <end position="462"/>
    </location>
</feature>
<feature type="helix" evidence="11">
    <location>
        <begin position="463"/>
        <end position="474"/>
    </location>
</feature>
<feature type="helix" evidence="11">
    <location>
        <begin position="479"/>
        <end position="496"/>
    </location>
</feature>
<feature type="helix" evidence="11">
    <location>
        <begin position="499"/>
        <end position="502"/>
    </location>
</feature>
<feature type="helix" evidence="11">
    <location>
        <begin position="506"/>
        <end position="517"/>
    </location>
</feature>
<feature type="helix" evidence="11">
    <location>
        <begin position="526"/>
        <end position="550"/>
    </location>
</feature>
<proteinExistence type="evidence at protein level"/>
<name>RHG20_HUMAN</name>
<protein>
    <recommendedName>
        <fullName>Rho GTPase-activating protein 20</fullName>
    </recommendedName>
    <alternativeName>
        <fullName>Rho-type GTPase-activating protein 20</fullName>
    </alternativeName>
</protein>
<dbReference type="EMBL" id="AY496263">
    <property type="protein sequence ID" value="AAS45466.1"/>
    <property type="molecule type" value="mRNA"/>
</dbReference>
<dbReference type="EMBL" id="AY496264">
    <property type="protein sequence ID" value="AAS45467.1"/>
    <property type="molecule type" value="mRNA"/>
</dbReference>
<dbReference type="EMBL" id="AY496265">
    <property type="protein sequence ID" value="AAS45468.1"/>
    <property type="molecule type" value="mRNA"/>
</dbReference>
<dbReference type="EMBL" id="AY496266">
    <property type="protein sequence ID" value="AAS45469.1"/>
    <property type="molecule type" value="mRNA"/>
</dbReference>
<dbReference type="EMBL" id="AY496267">
    <property type="protein sequence ID" value="AAS45470.1"/>
    <property type="molecule type" value="mRNA"/>
</dbReference>
<dbReference type="EMBL" id="AB037812">
    <property type="protein sequence ID" value="BAA92629.1"/>
    <property type="status" value="ALT_INIT"/>
    <property type="molecule type" value="mRNA"/>
</dbReference>
<dbReference type="EMBL" id="EF444953">
    <property type="protein sequence ID" value="ACA05945.1"/>
    <property type="molecule type" value="Genomic_DNA"/>
</dbReference>
<dbReference type="EMBL" id="EF444953">
    <property type="protein sequence ID" value="ACA05946.1"/>
    <property type="molecule type" value="Genomic_DNA"/>
</dbReference>
<dbReference type="EMBL" id="CH471065">
    <property type="protein sequence ID" value="EAW67134.1"/>
    <property type="molecule type" value="Genomic_DNA"/>
</dbReference>
<dbReference type="EMBL" id="AK292290">
    <property type="protein sequence ID" value="BAF84979.1"/>
    <property type="status" value="ALT_SEQ"/>
    <property type="molecule type" value="mRNA"/>
</dbReference>
<dbReference type="EMBL" id="BC039340">
    <property type="protein sequence ID" value="AAH39340.1"/>
    <property type="status" value="ALT_SEQ"/>
    <property type="molecule type" value="mRNA"/>
</dbReference>
<dbReference type="CCDS" id="CCDS31673.1">
    <molecule id="Q9P2F6-1"/>
</dbReference>
<dbReference type="CCDS" id="CCDS58175.1">
    <molecule id="Q9P2F6-4"/>
</dbReference>
<dbReference type="CCDS" id="CCDS58176.1">
    <molecule id="Q9P2F6-2"/>
</dbReference>
<dbReference type="CCDS" id="CCDS58177.1">
    <molecule id="Q9P2F6-3"/>
</dbReference>
<dbReference type="PIR" id="C59436">
    <property type="entry name" value="C59436"/>
</dbReference>
<dbReference type="RefSeq" id="NP_001245344.1">
    <molecule id="Q9P2F6-3"/>
    <property type="nucleotide sequence ID" value="NM_001258415.2"/>
</dbReference>
<dbReference type="RefSeq" id="NP_001245345.1">
    <molecule id="Q9P2F6-2"/>
    <property type="nucleotide sequence ID" value="NM_001258416.2"/>
</dbReference>
<dbReference type="RefSeq" id="NP_001245346.1">
    <molecule id="Q9P2F6-4"/>
    <property type="nucleotide sequence ID" value="NM_001258417.2"/>
</dbReference>
<dbReference type="RefSeq" id="NP_001245347.1">
    <molecule id="Q9P2F6-4"/>
    <property type="nucleotide sequence ID" value="NM_001258418.2"/>
</dbReference>
<dbReference type="RefSeq" id="NP_001371586.1">
    <molecule id="Q9P2F6-1"/>
    <property type="nucleotide sequence ID" value="NM_001384657.1"/>
</dbReference>
<dbReference type="RefSeq" id="NP_065860.2">
    <molecule id="Q9P2F6-1"/>
    <property type="nucleotide sequence ID" value="NM_020809.4"/>
</dbReference>
<dbReference type="RefSeq" id="XP_006718956.1">
    <property type="nucleotide sequence ID" value="XM_006718893.3"/>
</dbReference>
<dbReference type="PDB" id="3MSX">
    <property type="method" value="X-ray"/>
    <property type="resolution" value="1.65 A"/>
    <property type="chains" value="B=351-551"/>
</dbReference>
<dbReference type="PDBsum" id="3MSX"/>
<dbReference type="SMR" id="Q9P2F6"/>
<dbReference type="BioGRID" id="121622">
    <property type="interactions" value="28"/>
</dbReference>
<dbReference type="FunCoup" id="Q9P2F6">
    <property type="interactions" value="846"/>
</dbReference>
<dbReference type="IntAct" id="Q9P2F6">
    <property type="interactions" value="12"/>
</dbReference>
<dbReference type="STRING" id="9606.ENSP00000260283"/>
<dbReference type="iPTMnet" id="Q9P2F6"/>
<dbReference type="PhosphoSitePlus" id="Q9P2F6"/>
<dbReference type="BioMuta" id="ARHGAP20"/>
<dbReference type="DMDM" id="143458429"/>
<dbReference type="jPOST" id="Q9P2F6"/>
<dbReference type="MassIVE" id="Q9P2F6"/>
<dbReference type="PaxDb" id="9606-ENSP00000260283"/>
<dbReference type="PeptideAtlas" id="Q9P2F6"/>
<dbReference type="ProteomicsDB" id="83803">
    <molecule id="Q9P2F6-1"/>
</dbReference>
<dbReference type="ProteomicsDB" id="83804">
    <molecule id="Q9P2F6-2"/>
</dbReference>
<dbReference type="ProteomicsDB" id="83805">
    <molecule id="Q9P2F6-3"/>
</dbReference>
<dbReference type="ProteomicsDB" id="83806">
    <molecule id="Q9P2F6-4"/>
</dbReference>
<dbReference type="Antibodypedia" id="32015">
    <property type="antibodies" value="125 antibodies from 27 providers"/>
</dbReference>
<dbReference type="DNASU" id="57569"/>
<dbReference type="Ensembl" id="ENST00000260283.8">
    <molecule id="Q9P2F6-1"/>
    <property type="protein sequence ID" value="ENSP00000260283.4"/>
    <property type="gene ID" value="ENSG00000137727.13"/>
</dbReference>
<dbReference type="Ensembl" id="ENST00000524756.5">
    <molecule id="Q9P2F6-3"/>
    <property type="protein sequence ID" value="ENSP00000432076.1"/>
    <property type="gene ID" value="ENSG00000137727.13"/>
</dbReference>
<dbReference type="Ensembl" id="ENST00000527598.1">
    <molecule id="Q9P2F6-4"/>
    <property type="protein sequence ID" value="ENSP00000431399.1"/>
    <property type="gene ID" value="ENSG00000137727.13"/>
</dbReference>
<dbReference type="Ensembl" id="ENST00000528829.5">
    <molecule id="Q9P2F6-4"/>
    <property type="protein sequence ID" value="ENSP00000436319.1"/>
    <property type="gene ID" value="ENSG00000137727.13"/>
</dbReference>
<dbReference type="Ensembl" id="ENST00000533353.5">
    <molecule id="Q9P2F6-2"/>
    <property type="protein sequence ID" value="ENSP00000436522.1"/>
    <property type="gene ID" value="ENSG00000137727.13"/>
</dbReference>
<dbReference type="Ensembl" id="ENST00000683387.1">
    <molecule id="Q9P2F6-1"/>
    <property type="protein sequence ID" value="ENSP00000507405.1"/>
    <property type="gene ID" value="ENSG00000137727.13"/>
</dbReference>
<dbReference type="GeneID" id="57569"/>
<dbReference type="KEGG" id="hsa:57569"/>
<dbReference type="MANE-Select" id="ENST00000683387.1">
    <property type="protein sequence ID" value="ENSP00000507405.1"/>
    <property type="RefSeq nucleotide sequence ID" value="NM_001384657.1"/>
    <property type="RefSeq protein sequence ID" value="NP_001371586.1"/>
</dbReference>
<dbReference type="UCSC" id="uc001pky.3">
    <molecule id="Q9P2F6-1"/>
    <property type="organism name" value="human"/>
</dbReference>
<dbReference type="AGR" id="HGNC:18357"/>
<dbReference type="CTD" id="57569"/>
<dbReference type="DisGeNET" id="57569"/>
<dbReference type="GeneCards" id="ARHGAP20"/>
<dbReference type="HGNC" id="HGNC:18357">
    <property type="gene designation" value="ARHGAP20"/>
</dbReference>
<dbReference type="HPA" id="ENSG00000137727">
    <property type="expression patterns" value="Low tissue specificity"/>
</dbReference>
<dbReference type="MalaCards" id="ARHGAP20"/>
<dbReference type="MIM" id="609568">
    <property type="type" value="gene"/>
</dbReference>
<dbReference type="neXtProt" id="NX_Q9P2F6"/>
<dbReference type="OpenTargets" id="ENSG00000137727"/>
<dbReference type="PharmGKB" id="PA134963885"/>
<dbReference type="VEuPathDB" id="HostDB:ENSG00000137727"/>
<dbReference type="eggNOG" id="KOG4724">
    <property type="taxonomic scope" value="Eukaryota"/>
</dbReference>
<dbReference type="GeneTree" id="ENSGT00940000154633"/>
<dbReference type="HOGENOM" id="CLU_008526_0_0_1"/>
<dbReference type="InParanoid" id="Q9P2F6"/>
<dbReference type="OrthoDB" id="9994905at2759"/>
<dbReference type="PAN-GO" id="Q9P2F6">
    <property type="GO annotations" value="1 GO annotation based on evolutionary models"/>
</dbReference>
<dbReference type="PhylomeDB" id="Q9P2F6"/>
<dbReference type="TreeFam" id="TF331062"/>
<dbReference type="PathwayCommons" id="Q9P2F6"/>
<dbReference type="Reactome" id="R-HSA-8980692">
    <property type="pathway name" value="RHOA GTPase cycle"/>
</dbReference>
<dbReference type="Reactome" id="R-HSA-9013148">
    <property type="pathway name" value="CDC42 GTPase cycle"/>
</dbReference>
<dbReference type="Reactome" id="R-HSA-9013149">
    <property type="pathway name" value="RAC1 GTPase cycle"/>
</dbReference>
<dbReference type="SignaLink" id="Q9P2F6"/>
<dbReference type="SIGNOR" id="Q9P2F6"/>
<dbReference type="BioGRID-ORCS" id="57569">
    <property type="hits" value="8 hits in 1147 CRISPR screens"/>
</dbReference>
<dbReference type="EvolutionaryTrace" id="Q9P2F6"/>
<dbReference type="GenomeRNAi" id="57569"/>
<dbReference type="Pharos" id="Q9P2F6">
    <property type="development level" value="Tbio"/>
</dbReference>
<dbReference type="PRO" id="PR:Q9P2F6"/>
<dbReference type="Proteomes" id="UP000005640">
    <property type="component" value="Chromosome 11"/>
</dbReference>
<dbReference type="RNAct" id="Q9P2F6">
    <property type="molecule type" value="protein"/>
</dbReference>
<dbReference type="Bgee" id="ENSG00000137727">
    <property type="expression patterns" value="Expressed in cortical plate and 159 other cell types or tissues"/>
</dbReference>
<dbReference type="ExpressionAtlas" id="Q9P2F6">
    <property type="expression patterns" value="baseline and differential"/>
</dbReference>
<dbReference type="GO" id="GO:0005829">
    <property type="term" value="C:cytosol"/>
    <property type="evidence" value="ECO:0000304"/>
    <property type="project" value="Reactome"/>
</dbReference>
<dbReference type="GO" id="GO:0005096">
    <property type="term" value="F:GTPase activator activity"/>
    <property type="evidence" value="ECO:0000318"/>
    <property type="project" value="GO_Central"/>
</dbReference>
<dbReference type="GO" id="GO:0035023">
    <property type="term" value="P:regulation of Rho protein signal transduction"/>
    <property type="evidence" value="ECO:0007669"/>
    <property type="project" value="InterPro"/>
</dbReference>
<dbReference type="GO" id="GO:0051056">
    <property type="term" value="P:regulation of small GTPase mediated signal transduction"/>
    <property type="evidence" value="ECO:0000304"/>
    <property type="project" value="Reactome"/>
</dbReference>
<dbReference type="GO" id="GO:0007165">
    <property type="term" value="P:signal transduction"/>
    <property type="evidence" value="ECO:0007669"/>
    <property type="project" value="InterPro"/>
</dbReference>
<dbReference type="CDD" id="cd13319">
    <property type="entry name" value="PH_RARhoGAP"/>
    <property type="match status" value="1"/>
</dbReference>
<dbReference type="CDD" id="cd17115">
    <property type="entry name" value="RA_RHG20"/>
    <property type="match status" value="1"/>
</dbReference>
<dbReference type="CDD" id="cd04402">
    <property type="entry name" value="RhoGAP_ARHGAP20"/>
    <property type="match status" value="1"/>
</dbReference>
<dbReference type="FunFam" id="2.30.29.30:FF:000217">
    <property type="entry name" value="Rho GTPase activating protein 20"/>
    <property type="match status" value="1"/>
</dbReference>
<dbReference type="FunFam" id="1.10.555.10:FF:000025">
    <property type="entry name" value="Rho GTPase-activating protein 20"/>
    <property type="match status" value="1"/>
</dbReference>
<dbReference type="Gene3D" id="2.30.29.30">
    <property type="entry name" value="Pleckstrin-homology domain (PH domain)/Phosphotyrosine-binding domain (PTB)"/>
    <property type="match status" value="1"/>
</dbReference>
<dbReference type="Gene3D" id="1.10.555.10">
    <property type="entry name" value="Rho GTPase activation protein"/>
    <property type="match status" value="1"/>
</dbReference>
<dbReference type="InterPro" id="IPR047886">
    <property type="entry name" value="ARHGAP20-like_RhoGAP"/>
</dbReference>
<dbReference type="InterPro" id="IPR047887">
    <property type="entry name" value="ARHGAP20_PH"/>
</dbReference>
<dbReference type="InterPro" id="IPR047888">
    <property type="entry name" value="ARHGAP20_RA"/>
</dbReference>
<dbReference type="InterPro" id="IPR011993">
    <property type="entry name" value="PH-like_dom_sf"/>
</dbReference>
<dbReference type="InterPro" id="IPR001849">
    <property type="entry name" value="PH_domain"/>
</dbReference>
<dbReference type="InterPro" id="IPR000159">
    <property type="entry name" value="RA_dom"/>
</dbReference>
<dbReference type="InterPro" id="IPR008936">
    <property type="entry name" value="Rho_GTPase_activation_prot"/>
</dbReference>
<dbReference type="InterPro" id="IPR000198">
    <property type="entry name" value="RhoGAP_dom"/>
</dbReference>
<dbReference type="InterPro" id="IPR029071">
    <property type="entry name" value="Ubiquitin-like_domsf"/>
</dbReference>
<dbReference type="PANTHER" id="PTHR23179:SF28">
    <property type="entry name" value="RHO GTPASE-ACTIVATING PROTEIN 20"/>
    <property type="match status" value="1"/>
</dbReference>
<dbReference type="PANTHER" id="PTHR23179">
    <property type="entry name" value="T-CELL ACTIVATION RHO GTPASE ACTIVATING PROTEIN-RELATED"/>
    <property type="match status" value="1"/>
</dbReference>
<dbReference type="Pfam" id="PF00788">
    <property type="entry name" value="RA"/>
    <property type="match status" value="1"/>
</dbReference>
<dbReference type="Pfam" id="PF22286">
    <property type="entry name" value="RHG20_PH"/>
    <property type="match status" value="1"/>
</dbReference>
<dbReference type="Pfam" id="PF00620">
    <property type="entry name" value="RhoGAP"/>
    <property type="match status" value="1"/>
</dbReference>
<dbReference type="SMART" id="SM00233">
    <property type="entry name" value="PH"/>
    <property type="match status" value="1"/>
</dbReference>
<dbReference type="SMART" id="SM00324">
    <property type="entry name" value="RhoGAP"/>
    <property type="match status" value="1"/>
</dbReference>
<dbReference type="SUPFAM" id="SSF48350">
    <property type="entry name" value="GTPase activation domain, GAP"/>
    <property type="match status" value="1"/>
</dbReference>
<dbReference type="SUPFAM" id="SSF50729">
    <property type="entry name" value="PH domain-like"/>
    <property type="match status" value="1"/>
</dbReference>
<dbReference type="SUPFAM" id="SSF54236">
    <property type="entry name" value="Ubiquitin-like"/>
    <property type="match status" value="1"/>
</dbReference>
<dbReference type="PROSITE" id="PS50200">
    <property type="entry name" value="RA"/>
    <property type="match status" value="1"/>
</dbReference>
<dbReference type="PROSITE" id="PS50238">
    <property type="entry name" value="RHOGAP"/>
    <property type="match status" value="1"/>
</dbReference>
<keyword id="KW-0002">3D-structure</keyword>
<keyword id="KW-0025">Alternative splicing</keyword>
<keyword id="KW-0160">Chromosomal rearrangement</keyword>
<keyword id="KW-0343">GTPase activation</keyword>
<keyword id="KW-0597">Phosphoprotein</keyword>
<keyword id="KW-1267">Proteomics identification</keyword>
<keyword id="KW-1185">Reference proteome</keyword>
<keyword id="KW-0043">Tumor suppressor</keyword>
<organism>
    <name type="scientific">Homo sapiens</name>
    <name type="common">Human</name>
    <dbReference type="NCBI Taxonomy" id="9606"/>
    <lineage>
        <taxon>Eukaryota</taxon>
        <taxon>Metazoa</taxon>
        <taxon>Chordata</taxon>
        <taxon>Craniata</taxon>
        <taxon>Vertebrata</taxon>
        <taxon>Euteleostomi</taxon>
        <taxon>Mammalia</taxon>
        <taxon>Eutheria</taxon>
        <taxon>Euarchontoglires</taxon>
        <taxon>Primates</taxon>
        <taxon>Haplorrhini</taxon>
        <taxon>Catarrhini</taxon>
        <taxon>Hominidae</taxon>
        <taxon>Homo</taxon>
    </lineage>
</organism>
<accession>Q9P2F6</accession>
<accession>A8K8C5</accession>
<accession>B0YIW7</accession>
<accession>B0YIW8</accession>
<accession>Q6RJU1</accession>
<accession>Q6RJU2</accession>
<accession>Q6RJU3</accession>
<accession>Q6RJU5</accession>
<accession>Q8IXS1</accession>
<evidence type="ECO:0000250" key="1"/>
<evidence type="ECO:0000250" key="2">
    <source>
        <dbReference type="UniProtKB" id="Q6IFT4"/>
    </source>
</evidence>
<evidence type="ECO:0000255" key="3">
    <source>
        <dbReference type="PROSITE-ProRule" id="PRU00166"/>
    </source>
</evidence>
<evidence type="ECO:0000255" key="4">
    <source>
        <dbReference type="PROSITE-ProRule" id="PRU00172"/>
    </source>
</evidence>
<evidence type="ECO:0000256" key="5">
    <source>
        <dbReference type="SAM" id="MobiDB-lite"/>
    </source>
</evidence>
<evidence type="ECO:0000269" key="6">
    <source>
    </source>
</evidence>
<evidence type="ECO:0000269" key="7">
    <source>
    </source>
</evidence>
<evidence type="ECO:0000303" key="8">
    <source>
    </source>
</evidence>
<evidence type="ECO:0000305" key="9"/>
<evidence type="ECO:0000305" key="10">
    <source>
    </source>
</evidence>
<evidence type="ECO:0007829" key="11">
    <source>
        <dbReference type="PDB" id="3MSX"/>
    </source>
</evidence>
<comment type="function">
    <text evidence="1">GTPase activator for the Rho-type GTPases by converting them to an inactive GDP-bound state.</text>
</comment>
<comment type="alternative products">
    <event type="alternative splicing"/>
    <isoform>
        <id>Q9P2F6-1</id>
        <name>1</name>
        <name>1ad</name>
        <sequence type="displayed"/>
    </isoform>
    <isoform>
        <id>Q9P2F6-2</id>
        <name>2</name>
        <name>1be</name>
        <sequence type="described" ref="VSP_024294"/>
    </isoform>
    <isoform>
        <id>Q9P2F6-3</id>
        <name>3</name>
        <name>1c</name>
        <sequence type="described" ref="VSP_024295"/>
    </isoform>
    <isoform>
        <id>Q9P2F6-4</id>
        <name>4</name>
        <name>1e</name>
        <name>1d</name>
        <sequence type="described" ref="VSP_024296"/>
    </isoform>
</comment>
<comment type="tissue specificity">
    <text evidence="7">Expressed predominantly in the brain. Lower expression is found in lymph nodes.</text>
</comment>
<comment type="developmental stage">
    <text evidence="7">Low expression is found in fetal liver.</text>
</comment>
<comment type="disease">
    <text evidence="7">A chromosomal aberration involving ARHGAP20 may be a cause of B-cell chronic lymphocytic leukemia (B-CLL) (PubMed:15543602). Translocation t(X;11)(q21;q23) with BRWD3 does not result in fusion transcripts but disrupts both genes (PubMed:15543602).</text>
</comment>
<comment type="caution">
    <text evidence="10">The translocation involving this gene was originally published as t(X;11)(q13;23), but BRWD3 is localized to Xq21 and not to Xq13.</text>
</comment>
<comment type="sequence caution" evidence="9">
    <conflict type="erroneous initiation">
        <sequence resource="EMBL-CDS" id="AAH39340"/>
    </conflict>
    <text>Extended N-terminus.</text>
</comment>
<comment type="sequence caution" evidence="9">
    <conflict type="miscellaneous discrepancy">
        <sequence resource="EMBL-CDS" id="AAH39340"/>
    </conflict>
    <text>Probable cloning artifact.</text>
</comment>
<comment type="sequence caution" evidence="9">
    <conflict type="erroneous initiation">
        <sequence resource="EMBL-CDS" id="BAA92629"/>
    </conflict>
    <text>Extended N-terminus.</text>
</comment>
<comment type="sequence caution" evidence="9">
    <conflict type="erroneous initiation">
        <sequence resource="EMBL-CDS" id="BAF84979"/>
    </conflict>
    <text>Extended N-terminus.</text>
</comment>
<comment type="sequence caution" evidence="9">
    <conflict type="miscellaneous discrepancy">
        <sequence resource="EMBL-CDS" id="BAF84979"/>
    </conflict>
    <text>Probable cloning artifact.</text>
</comment>
<comment type="online information" name="Atlas of Genetics and Cytogenetics in Oncology and Haematology">
    <link uri="https://atlasgeneticsoncology.org/gene/42979/ARHGAP20"/>
</comment>
<sequence>MEAMSPQQETLGGQPGRSSSLTGVSRLAGGSCTKKKMKTLAERRRSAPSLILDKALQKRPTTRDSPSASVDTCTFLSSLVCSNRTLLIDGRAELKRGLQRQERHLFLFNDLFVVAKIKYNNNFKIKNKIKLTDMWTASCVDEVGEGNTNAMKSFVLGWPTVNFVATFSSPEQKDKWLSLLQRYINLEKEKDYPKSIPLKIFAKDIGNCAYSKTITVMNSDTANEVINMSLPMLGITGSERDYQLWVNSGKEEAPYPLIGHEYPYGIKMSHLRDSALLTPGSKDSTTPFNLQEPFLMEQLPREMQCQFILKPSRLAAAQQLSDSGHKTFKRRRSIINWAFWRGSSTHLDNLPSSPTSPMPGQLFGISLPNICENDNLPKPVLDMLFFLNQKGPLTKGIFRQSANVKSCRELKEKLNSGVEVHLDCESIFVIASVLKDFLRNIPGSIFSSDLYDHWVSVMDQGNDEEKINTVQRLLDQLPRANVVLLRYLFGVLHNIEQHSSSNQMTAFNLAVCVAPSILWPPASSSPELENEFTKKVSLLIQFLIENCLRIFGEEITSLFREVSVRCDTRENASDISCFQLNDSSYDSLENELNEDVDAPCSDLVKKLGQGSRSMDSVLTLSDYDLDQPEVEGLLTLSDFDLAHSKDEDVQMKRPLESKPVNILVYTKIPLRDHARAPSAMCTPSYLSTAAANAAKSLRRHRRCSEPSIDYLDSKLSYLREFYQKKLRKSSCDAILSQKDEDYLKQNQPLQEEGKTCFKQSLVTGTDVSKKNATTQNTKKKSLSGSEGNHVKLFPKSKPVAISVASYSPMSSQDHSKNQPFDVNTSGYSPPHTADALKGPRTHRRCSEPNIEDQNRKLTYLRGIYSKKQHKTSCEAGLLHGEEDYLKRHKSLQMEGQKLINQSLVMGIEVGKSSATNQNTEKVLPPRLNLCPRTSYSSLSSPGTSPSGSSVSSQDSAFSQISEHSVFTPTETSSPIDCTFQAQRKREDLSPDFSNASHVSGMPGPSSGQACSRPAYTKKDTMEWHSQMHSVTLHPSTWLRNGVASLKNWSLKKKAKAARPEEEKIASPKGPLEPPPHASGVPEANSLQEEQKDLPLRAAEGLSPVQSAQRCSSSPFQDSERHCSSPFSLVESRLKLCMKSHEEIEPGSQSSSGSLPWERASASSWTLEDATSPDSGPTVVCDIEDRYLTKDI</sequence>